<reference key="1">
    <citation type="journal article" date="2009" name="Nature">
        <title>Evolution of pathogenicity and sexual reproduction in eight Candida genomes.</title>
        <authorList>
            <person name="Butler G."/>
            <person name="Rasmussen M.D."/>
            <person name="Lin M.F."/>
            <person name="Santos M.A.S."/>
            <person name="Sakthikumar S."/>
            <person name="Munro C.A."/>
            <person name="Rheinbay E."/>
            <person name="Grabherr M."/>
            <person name="Forche A."/>
            <person name="Reedy J.L."/>
            <person name="Agrafioti I."/>
            <person name="Arnaud M.B."/>
            <person name="Bates S."/>
            <person name="Brown A.J.P."/>
            <person name="Brunke S."/>
            <person name="Costanzo M.C."/>
            <person name="Fitzpatrick D.A."/>
            <person name="de Groot P.W.J."/>
            <person name="Harris D."/>
            <person name="Hoyer L.L."/>
            <person name="Hube B."/>
            <person name="Klis F.M."/>
            <person name="Kodira C."/>
            <person name="Lennard N."/>
            <person name="Logue M.E."/>
            <person name="Martin R."/>
            <person name="Neiman A.M."/>
            <person name="Nikolaou E."/>
            <person name="Quail M.A."/>
            <person name="Quinn J."/>
            <person name="Santos M.C."/>
            <person name="Schmitzberger F.F."/>
            <person name="Sherlock G."/>
            <person name="Shah P."/>
            <person name="Silverstein K.A.T."/>
            <person name="Skrzypek M.S."/>
            <person name="Soll D."/>
            <person name="Staggs R."/>
            <person name="Stansfield I."/>
            <person name="Stumpf M.P.H."/>
            <person name="Sudbery P.E."/>
            <person name="Srikantha T."/>
            <person name="Zeng Q."/>
            <person name="Berman J."/>
            <person name="Berriman M."/>
            <person name="Heitman J."/>
            <person name="Gow N.A.R."/>
            <person name="Lorenz M.C."/>
            <person name="Birren B.W."/>
            <person name="Kellis M."/>
            <person name="Cuomo C.A."/>
        </authorList>
    </citation>
    <scope>NUCLEOTIDE SEQUENCE [LARGE SCALE GENOMIC DNA]</scope>
    <source>
        <strain>ATCC 6260 / CBS 566 / DSM 6381 / JCM 1539 / NBRC 10279 / NRRL Y-324</strain>
    </source>
</reference>
<name>AIM14_PICGU</name>
<dbReference type="EC" id="1.16.1.-"/>
<dbReference type="EMBL" id="CH408156">
    <property type="protein sequence ID" value="EDK37414.2"/>
    <property type="molecule type" value="Genomic_DNA"/>
</dbReference>
<dbReference type="RefSeq" id="XP_001485841.1">
    <property type="nucleotide sequence ID" value="XM_001485791.1"/>
</dbReference>
<dbReference type="SMR" id="A5DE11"/>
<dbReference type="FunCoup" id="A5DE11">
    <property type="interactions" value="20"/>
</dbReference>
<dbReference type="GeneID" id="5127468"/>
<dbReference type="KEGG" id="pgu:PGUG_01512"/>
<dbReference type="VEuPathDB" id="FungiDB:PGUG_01512"/>
<dbReference type="eggNOG" id="KOG0039">
    <property type="taxonomic scope" value="Eukaryota"/>
</dbReference>
<dbReference type="HOGENOM" id="CLU_036508_0_0_1"/>
<dbReference type="InParanoid" id="A5DE11"/>
<dbReference type="OMA" id="GRMAYCL"/>
<dbReference type="OrthoDB" id="17725at2759"/>
<dbReference type="Proteomes" id="UP000001997">
    <property type="component" value="Unassembled WGS sequence"/>
</dbReference>
<dbReference type="GO" id="GO:0005886">
    <property type="term" value="C:plasma membrane"/>
    <property type="evidence" value="ECO:0007669"/>
    <property type="project" value="TreeGrafter"/>
</dbReference>
<dbReference type="GO" id="GO:0000293">
    <property type="term" value="F:ferric-chelate reductase activity"/>
    <property type="evidence" value="ECO:0007669"/>
    <property type="project" value="TreeGrafter"/>
</dbReference>
<dbReference type="GO" id="GO:0033215">
    <property type="term" value="P:reductive iron assimilation"/>
    <property type="evidence" value="ECO:0007669"/>
    <property type="project" value="TreeGrafter"/>
</dbReference>
<dbReference type="CDD" id="cd06186">
    <property type="entry name" value="NOX_Duox_like_FAD_NADP"/>
    <property type="match status" value="1"/>
</dbReference>
<dbReference type="Gene3D" id="3.40.50.80">
    <property type="entry name" value="Nucleotide-binding domain of ferredoxin-NADP reductase (FNR) module"/>
    <property type="match status" value="1"/>
</dbReference>
<dbReference type="InterPro" id="IPR013112">
    <property type="entry name" value="FAD-bd_8"/>
</dbReference>
<dbReference type="InterPro" id="IPR013130">
    <property type="entry name" value="Fe3_Rdtase_TM_dom"/>
</dbReference>
<dbReference type="InterPro" id="IPR013121">
    <property type="entry name" value="Fe_red_NAD-bd_6"/>
</dbReference>
<dbReference type="InterPro" id="IPR039261">
    <property type="entry name" value="FNR_nucleotide-bd"/>
</dbReference>
<dbReference type="InterPro" id="IPR050369">
    <property type="entry name" value="RBOH/FRE"/>
</dbReference>
<dbReference type="PANTHER" id="PTHR11972:SF198">
    <property type="entry name" value="METALLOREDUCTASE AIM14-RELATED"/>
    <property type="match status" value="1"/>
</dbReference>
<dbReference type="PANTHER" id="PTHR11972">
    <property type="entry name" value="NADPH OXIDASE"/>
    <property type="match status" value="1"/>
</dbReference>
<dbReference type="Pfam" id="PF08022">
    <property type="entry name" value="FAD_binding_8"/>
    <property type="match status" value="1"/>
</dbReference>
<dbReference type="Pfam" id="PF01794">
    <property type="entry name" value="Ferric_reduct"/>
    <property type="match status" value="1"/>
</dbReference>
<dbReference type="Pfam" id="PF08030">
    <property type="entry name" value="NAD_binding_6"/>
    <property type="match status" value="1"/>
</dbReference>
<dbReference type="SFLD" id="SFLDF00463">
    <property type="entry name" value="AIM14"/>
    <property type="match status" value="1"/>
</dbReference>
<dbReference type="SFLD" id="SFLDS00052">
    <property type="entry name" value="Ferric_Reductase_Domain"/>
    <property type="match status" value="1"/>
</dbReference>
<dbReference type="SFLD" id="SFLDG01168">
    <property type="entry name" value="Ferric_reductase_subgroup_(FRE"/>
    <property type="match status" value="1"/>
</dbReference>
<dbReference type="SUPFAM" id="SSF52343">
    <property type="entry name" value="Ferredoxin reductase-like, C-terminal NADP-linked domain"/>
    <property type="match status" value="1"/>
</dbReference>
<organism>
    <name type="scientific">Meyerozyma guilliermondii (strain ATCC 6260 / CBS 566 / DSM 6381 / JCM 1539 / NBRC 10279 / NRRL Y-324)</name>
    <name type="common">Yeast</name>
    <name type="synonym">Candida guilliermondii</name>
    <dbReference type="NCBI Taxonomy" id="294746"/>
    <lineage>
        <taxon>Eukaryota</taxon>
        <taxon>Fungi</taxon>
        <taxon>Dikarya</taxon>
        <taxon>Ascomycota</taxon>
        <taxon>Saccharomycotina</taxon>
        <taxon>Pichiomycetes</taxon>
        <taxon>Debaryomycetaceae</taxon>
        <taxon>Meyerozyma</taxon>
    </lineage>
</organism>
<sequence>MHNHPRHEGHLHTVNVKYGYVVFLLSIVHIVVVATVPRLRKVGSSSTRRSLPWLPQIVIWAILLAILGVWNIHEWSEHYNVSIKRFGRMAYCLLPFDILLAYKYWPLENYLQNLNLHKWMSRIIVVCSMIHGIGYFVKWFVEGTFFHHLFKIDNLLGVVVFAAAVVLLVVSVALFRRQSYRLFYVSHNITIGMFVVLILFHARPPVTLFVAICGLLLAILFFIKFQTYSATPVSLKEVPNSSLVLVSFPWPDHIATSFKPGSHVRINHSNRSWKSWVFASHPFTSATLPGTSETLDLVVKKGTFIFAKDTQYNLSSPYTSLSFDDNSISRFDQSVIICGGSGISLAIPVFKYLITKLDVTMIWCTRSKADLFVLRHYSLLDKVQVYITGNDSLSVEDESEGHGLMHETIELENLEESSKNSEATKQPEILRGRPDLNNVCASLETTPNSSCVISCGPRSLVKDCENWCRNHKIESVTEIYEM</sequence>
<accession>A5DE11</accession>
<keyword id="KW-0249">Electron transport</keyword>
<keyword id="KW-0274">FAD</keyword>
<keyword id="KW-0285">Flavoprotein</keyword>
<keyword id="KW-0406">Ion transport</keyword>
<keyword id="KW-0472">Membrane</keyword>
<keyword id="KW-0521">NADP</keyword>
<keyword id="KW-0560">Oxidoreductase</keyword>
<keyword id="KW-1185">Reference proteome</keyword>
<keyword id="KW-0812">Transmembrane</keyword>
<keyword id="KW-1133">Transmembrane helix</keyword>
<keyword id="KW-0813">Transport</keyword>
<protein>
    <recommendedName>
        <fullName>Probable metalloreductase AIM14</fullName>
        <ecNumber>1.16.1.-</ecNumber>
    </recommendedName>
</protein>
<proteinExistence type="inferred from homology"/>
<evidence type="ECO:0000250" key="1"/>
<evidence type="ECO:0000255" key="2"/>
<evidence type="ECO:0000305" key="3"/>
<comment type="function">
    <text evidence="1">Probable cell surface metalloreductase. May be involved in iron or copper homeostasis (By similarity).</text>
</comment>
<comment type="subcellular location">
    <subcellularLocation>
        <location evidence="1">Membrane</location>
        <topology evidence="1">Multi-pass membrane protein</topology>
    </subcellularLocation>
</comment>
<comment type="similarity">
    <text evidence="3">Belongs to the ferric reductase (FRE) family. AIM14 subfamily.</text>
</comment>
<gene>
    <name type="primary">AIM14</name>
    <name type="ORF">PGUG_01512</name>
</gene>
<feature type="chain" id="PRO_0000408747" description="Probable metalloreductase AIM14">
    <location>
        <begin position="1"/>
        <end position="482"/>
    </location>
</feature>
<feature type="transmembrane region" description="Helical" evidence="2">
    <location>
        <begin position="16"/>
        <end position="36"/>
    </location>
</feature>
<feature type="transmembrane region" description="Helical" evidence="2">
    <location>
        <begin position="50"/>
        <end position="70"/>
    </location>
</feature>
<feature type="transmembrane region" description="Helical" evidence="2">
    <location>
        <begin position="87"/>
        <end position="106"/>
    </location>
</feature>
<feature type="transmembrane region" description="Helical" evidence="2">
    <location>
        <begin position="123"/>
        <end position="143"/>
    </location>
</feature>
<feature type="transmembrane region" description="Helical" evidence="2">
    <location>
        <begin position="155"/>
        <end position="175"/>
    </location>
</feature>
<feature type="transmembrane region" description="Helical" evidence="2">
    <location>
        <begin position="182"/>
        <end position="202"/>
    </location>
</feature>
<feature type="transmembrane region" description="Helical" evidence="2">
    <location>
        <begin position="205"/>
        <end position="225"/>
    </location>
</feature>
<feature type="domain" description="Ferric oxidoreductase">
    <location>
        <begin position="86"/>
        <end position="198"/>
    </location>
</feature>
<feature type="domain" description="FAD-binding FR-type">
    <location>
        <begin position="225"/>
        <end position="348"/>
    </location>
</feature>